<keyword id="KW-0085">Behavior</keyword>
<keyword id="KW-1015">Disulfide bond</keyword>
<keyword id="KW-0589">Pheromone response</keyword>
<keyword id="KW-0590">Pheromone-binding</keyword>
<keyword id="KW-0964">Secreted</keyword>
<keyword id="KW-0732">Signal</keyword>
<keyword id="KW-0813">Transport</keyword>
<accession>Q5EP01</accession>
<accession>A9LKF2</accession>
<accession>A9LKF3</accession>
<accession>A9LKF4</accession>
<accession>Q5ENZ9</accession>
<dbReference type="EMBL" id="AY818629">
    <property type="protein sequence ID" value="AAW80696.1"/>
    <property type="molecule type" value="Genomic_DNA"/>
</dbReference>
<dbReference type="EMBL" id="AY818630">
    <property type="protein sequence ID" value="AAW80697.1"/>
    <property type="molecule type" value="Genomic_DNA"/>
</dbReference>
<dbReference type="EMBL" id="AY818631">
    <property type="protein sequence ID" value="AAW80698.1"/>
    <property type="molecule type" value="Genomic_DNA"/>
</dbReference>
<dbReference type="EMBL" id="AY818632">
    <property type="protein sequence ID" value="AAW80699.1"/>
    <property type="molecule type" value="Genomic_DNA"/>
</dbReference>
<dbReference type="EMBL" id="EU220051">
    <property type="protein sequence ID" value="ABX25630.1"/>
    <property type="molecule type" value="Genomic_DNA"/>
</dbReference>
<dbReference type="EMBL" id="EU220052">
    <property type="protein sequence ID" value="ABX25631.1"/>
    <property type="molecule type" value="Genomic_DNA"/>
</dbReference>
<dbReference type="EMBL" id="EU220053">
    <property type="protein sequence ID" value="ABX25632.1"/>
    <property type="molecule type" value="Genomic_DNA"/>
</dbReference>
<dbReference type="SMR" id="Q5EP01"/>
<dbReference type="GO" id="GO:0005615">
    <property type="term" value="C:extracellular space"/>
    <property type="evidence" value="ECO:0000250"/>
    <property type="project" value="UniProtKB"/>
</dbReference>
<dbReference type="GO" id="GO:0005550">
    <property type="term" value="F:pheromone binding"/>
    <property type="evidence" value="ECO:0007669"/>
    <property type="project" value="UniProtKB-KW"/>
</dbReference>
<dbReference type="GO" id="GO:0019236">
    <property type="term" value="P:response to pheromone"/>
    <property type="evidence" value="ECO:0007669"/>
    <property type="project" value="UniProtKB-KW"/>
</dbReference>
<dbReference type="GO" id="GO:0035176">
    <property type="term" value="P:social behavior"/>
    <property type="evidence" value="ECO:0000250"/>
    <property type="project" value="UniProtKB"/>
</dbReference>
<dbReference type="CDD" id="cd23992">
    <property type="entry name" value="PBP_GOBP"/>
    <property type="match status" value="1"/>
</dbReference>
<dbReference type="FunFam" id="1.10.238.20:FF:000004">
    <property type="entry name" value="Pheromone-binding protein Gp-9"/>
    <property type="match status" value="1"/>
</dbReference>
<dbReference type="Gene3D" id="1.10.238.20">
    <property type="entry name" value="Pheromone/general odorant binding protein domain"/>
    <property type="match status" value="1"/>
</dbReference>
<dbReference type="InterPro" id="IPR006170">
    <property type="entry name" value="PBP/GOBP"/>
</dbReference>
<dbReference type="InterPro" id="IPR036728">
    <property type="entry name" value="PBP_GOBP_sf"/>
</dbReference>
<dbReference type="InterPro" id="IPR022354">
    <property type="entry name" value="Pheromone-bd_protein_Gp-9"/>
</dbReference>
<dbReference type="Pfam" id="PF01395">
    <property type="entry name" value="PBP_GOBP"/>
    <property type="match status" value="1"/>
</dbReference>
<dbReference type="PRINTS" id="PR02007">
    <property type="entry name" value="ODORANTBPGP9"/>
</dbReference>
<dbReference type="SUPFAM" id="SSF47565">
    <property type="entry name" value="Insect pheromone/odorant-binding proteins"/>
    <property type="match status" value="1"/>
</dbReference>
<reference evidence="7 8" key="1">
    <citation type="journal article" date="2005" name="Mol. Biol. Evol.">
        <title>Molecular evolutionary analyses of the odorant-binding protein gene Gp-9 in fire ants and other Solenopsis species.</title>
        <authorList>
            <person name="Krieger M.J.B."/>
            <person name="Ross K.G."/>
        </authorList>
    </citation>
    <scope>NUCLEOTIDE SEQUENCE [GENOMIC DNA] (ALLELES B1; B2 AND B)</scope>
    <scope>VARIANTS THR-39; GLY-42; ILE-95; THR-117; ALA-136; ILE-139; LYS-151 AND ALA-152</scope>
</reference>
<reference evidence="7 10" key="2">
    <citation type="journal article" date="2007" name="PLoS ONE">
        <title>Molecular variation at a candidate gene implicated in the regulation of fire ant social behavior.</title>
        <authorList>
            <person name="Gotzek D."/>
            <person name="Shoemaker D.D."/>
            <person name="Ross K.G."/>
        </authorList>
    </citation>
    <scope>NUCLEOTIDE SEQUENCE [GENOMIC DNA] OF 7-153</scope>
    <scope>VARIANTS LYS-25; GLU-35; ASP-45; LEU-75; MET-78; THR-105 AND GLU-106</scope>
    <source>
        <strain evidence="10">G-77/a</strain>
        <strain evidence="11">G-77/b</strain>
        <strain evidence="12">G-79</strain>
    </source>
</reference>
<proteinExistence type="inferred from homology"/>
<gene>
    <name evidence="9" type="primary">Gp-9</name>
</gene>
<evidence type="ECO:0000250" key="1"/>
<evidence type="ECO:0000250" key="2">
    <source>
        <dbReference type="UniProtKB" id="P20797"/>
    </source>
</evidence>
<evidence type="ECO:0000250" key="3">
    <source>
        <dbReference type="UniProtKB" id="Q8WP90"/>
    </source>
</evidence>
<evidence type="ECO:0000255" key="4"/>
<evidence type="ECO:0000269" key="5">
    <source>
    </source>
</evidence>
<evidence type="ECO:0000269" key="6">
    <source>
    </source>
</evidence>
<evidence type="ECO:0000305" key="7"/>
<evidence type="ECO:0000312" key="8">
    <source>
        <dbReference type="EMBL" id="AAW80696.1"/>
    </source>
</evidence>
<evidence type="ECO:0000312" key="9">
    <source>
        <dbReference type="EMBL" id="AAW80697.1"/>
    </source>
</evidence>
<evidence type="ECO:0000312" key="10">
    <source>
        <dbReference type="EMBL" id="ABX25630.1"/>
    </source>
</evidence>
<evidence type="ECO:0000312" key="11">
    <source>
        <dbReference type="EMBL" id="ABX25631.1"/>
    </source>
</evidence>
<evidence type="ECO:0000312" key="12">
    <source>
        <dbReference type="EMBL" id="ABX25632.1"/>
    </source>
</evidence>
<feature type="signal peptide" evidence="3">
    <location>
        <begin position="1"/>
        <end position="19"/>
    </location>
</feature>
<feature type="chain" id="PRO_5000094274" description="Pheromone-binding protein Gp-9" evidence="3">
    <location>
        <begin position="20"/>
        <end position="153"/>
    </location>
</feature>
<feature type="disulfide bond" evidence="2">
    <location>
        <begin position="37"/>
        <end position="77"/>
    </location>
</feature>
<feature type="disulfide bond" evidence="2">
    <location>
        <begin position="73"/>
        <end position="129"/>
    </location>
</feature>
<feature type="disulfide bond" evidence="2">
    <location>
        <begin position="118"/>
        <end position="138"/>
    </location>
</feature>
<feature type="sequence variant" description="In strain: G-77/a, G-77/b and G-79." evidence="6">
    <original>R</original>
    <variation>K</variation>
    <location>
        <position position="25"/>
    </location>
</feature>
<feature type="sequence variant" description="In strain: G-77/a, G-77/b and G-79." evidence="6">
    <original>A</original>
    <variation>E</variation>
    <location>
        <position position="35"/>
    </location>
</feature>
<feature type="sequence variant" description="In allele b." evidence="5">
    <original>A</original>
    <variation>T</variation>
    <location>
        <position position="39"/>
    </location>
</feature>
<feature type="sequence variant" description="In allele b." evidence="5">
    <original>S</original>
    <variation>G</variation>
    <location>
        <position position="42"/>
    </location>
</feature>
<feature type="sequence variant" description="In strain: G-77/a, G-77/b and G-79." evidence="6">
    <original>E</original>
    <variation>D</variation>
    <location>
        <position position="45"/>
    </location>
</feature>
<feature type="sequence variant" description="In strain: G-77/a, G-77/b and G-79." evidence="6">
    <original>M</original>
    <variation>L</variation>
    <location>
        <position position="75"/>
    </location>
</feature>
<feature type="sequence variant" description="In strain: G-77/a, G-77/b and G-79." evidence="6">
    <original>L</original>
    <variation>M</variation>
    <location>
        <position position="78"/>
    </location>
</feature>
<feature type="sequence variant" description="In allele b." evidence="5">
    <original>M</original>
    <variation>I</variation>
    <location>
        <position position="95"/>
    </location>
</feature>
<feature type="sequence variant" description="In strain: G-77/a, G-77/b and G-79." evidence="6">
    <original>A</original>
    <variation>T</variation>
    <location>
        <position position="105"/>
    </location>
</feature>
<feature type="sequence variant" description="In strain: G-77/a, G-77/b and G-79." evidence="6">
    <original>Q</original>
    <variation>E</variation>
    <location>
        <position position="106"/>
    </location>
</feature>
<feature type="sequence variant" description="In allele b." evidence="5">
    <original>A</original>
    <variation>T</variation>
    <location>
        <position position="117"/>
    </location>
</feature>
<feature type="sequence variant" description="In allele b." evidence="5">
    <original>V</original>
    <variation>A</variation>
    <location>
        <position position="136"/>
    </location>
</feature>
<feature type="sequence variant" description="In allele b." evidence="5">
    <original>V</original>
    <variation>I</variation>
    <location>
        <position position="139"/>
    </location>
</feature>
<feature type="sequence variant" description="In allele b." evidence="5">
    <original>E</original>
    <variation>K</variation>
    <location>
        <position position="151"/>
    </location>
</feature>
<feature type="sequence variant" description="In allele b." evidence="5">
    <original>G</original>
    <variation>A</variation>
    <location>
        <position position="152"/>
    </location>
</feature>
<sequence>MKTFVLHIFIFALVAFASASRDSARKIGSQYDNYATCLAEHSLTEDDIFSIGEVSSGQHKTNHEDTELHKNGCVMQCLLEKDGLMSGADYDEEKMREDYIKETGAQPGDQRIEALNACMQETKDMEDKCDKSLLLVACVLAAEAVLADSNEGA</sequence>
<comment type="function">
    <text evidence="3">Colony queen number, a major feature of social organization, is associated with worker genotype for Gp-9. Colonies are headed by either a single reproductive queen (monogyne form) or multiple queens (polygyne form). Differences in worker Gp-9 genotypes between social forms may cause differences in workers' abilities to recognize queens and regulate their numbers (By similarity).</text>
</comment>
<comment type="subunit">
    <text evidence="2">Homodimer.</text>
</comment>
<comment type="subcellular location">
    <subcellularLocation>
        <location evidence="1">Secreted</location>
    </subcellularLocation>
</comment>
<comment type="polymorphism">
    <text evidence="5">Alleles B1 and B2 are shown, a polygyne population from Brazil.</text>
</comment>
<comment type="similarity">
    <text evidence="4">Belongs to the PBP/GOBP family.</text>
</comment>
<name>PBGP9_SOLMG</name>
<organism>
    <name type="scientific">Solenopsis megergates</name>
    <name type="common">Fire ant</name>
    <dbReference type="NCBI Taxonomy" id="310439"/>
    <lineage>
        <taxon>Eukaryota</taxon>
        <taxon>Metazoa</taxon>
        <taxon>Ecdysozoa</taxon>
        <taxon>Arthropoda</taxon>
        <taxon>Hexapoda</taxon>
        <taxon>Insecta</taxon>
        <taxon>Pterygota</taxon>
        <taxon>Neoptera</taxon>
        <taxon>Endopterygota</taxon>
        <taxon>Hymenoptera</taxon>
        <taxon>Apocrita</taxon>
        <taxon>Aculeata</taxon>
        <taxon>Formicoidea</taxon>
        <taxon>Formicidae</taxon>
        <taxon>Myrmicinae</taxon>
        <taxon>Solenopsis</taxon>
    </lineage>
</organism>
<protein>
    <recommendedName>
        <fullName>Pheromone-binding protein Gp-9</fullName>
        <shortName>PBP</shortName>
    </recommendedName>
    <alternativeName>
        <fullName>Putative odorant-binding protein Gp-9</fullName>
    </alternativeName>
</protein>